<accession>O74348</accession>
<dbReference type="EMBL" id="CU329671">
    <property type="protein sequence ID" value="CAA20764.1"/>
    <property type="molecule type" value="Genomic_DNA"/>
</dbReference>
<dbReference type="PIR" id="T11680">
    <property type="entry name" value="T11680"/>
</dbReference>
<dbReference type="RefSeq" id="NP_596005.1">
    <property type="nucleotide sequence ID" value="NM_001021913.2"/>
</dbReference>
<dbReference type="SMR" id="O74348"/>
<dbReference type="BioGRID" id="277212">
    <property type="interactions" value="14"/>
</dbReference>
<dbReference type="iPTMnet" id="O74348"/>
<dbReference type="PaxDb" id="4896-SPBC21D10.08c.1"/>
<dbReference type="EnsemblFungi" id="SPBC21D10.08c.1">
    <property type="protein sequence ID" value="SPBC21D10.08c.1:pep"/>
    <property type="gene ID" value="SPBC21D10.08c"/>
</dbReference>
<dbReference type="KEGG" id="spo:2540687"/>
<dbReference type="PomBase" id="SPBC21D10.08c"/>
<dbReference type="VEuPathDB" id="FungiDB:SPBC21D10.08c"/>
<dbReference type="HOGENOM" id="CLU_1005289_0_0_1"/>
<dbReference type="InParanoid" id="O74348"/>
<dbReference type="OMA" id="QEQYCKS"/>
<dbReference type="PRO" id="PR:O74348"/>
<dbReference type="Proteomes" id="UP000002485">
    <property type="component" value="Chromosome II"/>
</dbReference>
<dbReference type="GO" id="GO:0005737">
    <property type="term" value="C:cytoplasm"/>
    <property type="evidence" value="ECO:0007005"/>
    <property type="project" value="PomBase"/>
</dbReference>
<dbReference type="GO" id="GO:0005829">
    <property type="term" value="C:cytosol"/>
    <property type="evidence" value="ECO:0007005"/>
    <property type="project" value="PomBase"/>
</dbReference>
<dbReference type="GO" id="GO:0005634">
    <property type="term" value="C:nucleus"/>
    <property type="evidence" value="ECO:0007005"/>
    <property type="project" value="PomBase"/>
</dbReference>
<evidence type="ECO:0000256" key="1">
    <source>
        <dbReference type="SAM" id="MobiDB-lite"/>
    </source>
</evidence>
<evidence type="ECO:0000269" key="2">
    <source>
    </source>
</evidence>
<protein>
    <recommendedName>
        <fullName>Uncharacterized protein C21D10.08c</fullName>
    </recommendedName>
</protein>
<proteinExistence type="predicted"/>
<organism>
    <name type="scientific">Schizosaccharomyces pombe (strain 972 / ATCC 24843)</name>
    <name type="common">Fission yeast</name>
    <dbReference type="NCBI Taxonomy" id="284812"/>
    <lineage>
        <taxon>Eukaryota</taxon>
        <taxon>Fungi</taxon>
        <taxon>Dikarya</taxon>
        <taxon>Ascomycota</taxon>
        <taxon>Taphrinomycotina</taxon>
        <taxon>Schizosaccharomycetes</taxon>
        <taxon>Schizosaccharomycetales</taxon>
        <taxon>Schizosaccharomycetaceae</taxon>
        <taxon>Schizosaccharomyces</taxon>
    </lineage>
</organism>
<gene>
    <name type="ORF">SPBC21D10.08c</name>
</gene>
<name>YO88_SCHPO</name>
<feature type="chain" id="PRO_0000304067" description="Uncharacterized protein C21D10.08c">
    <location>
        <begin position="1"/>
        <end position="277"/>
    </location>
</feature>
<feature type="region of interest" description="Disordered" evidence="1">
    <location>
        <begin position="232"/>
        <end position="262"/>
    </location>
</feature>
<feature type="compositionally biased region" description="Polar residues" evidence="1">
    <location>
        <begin position="234"/>
        <end position="243"/>
    </location>
</feature>
<comment type="subcellular location">
    <subcellularLocation>
        <location evidence="2">Cytoplasm</location>
    </subcellularLocation>
    <subcellularLocation>
        <location evidence="2">Nucleus</location>
    </subcellularLocation>
</comment>
<sequence length="277" mass="31757">MSNVEQPFMQGIDDGWNLKNYLNIQSTSLCLDKLCNIYTQGQDENEDAKELQAIKIKIEWCKDTSVLLSSICVMLLDSIHDFLVQQGKITKESISKRDYSHEITIFNFKYAQQEMQNEKLYHFAKLLEPALESLKVTNNHITHATIVGQVSGSEHNLSTAIEQVDVIVNYFYDSSEKFLELGNKVQTLGKAKNKKHWLGVYQSFGKASVDQIQKQLECYNVRMMELNKTDENNESAICESQASSKEDERSDKTTSSSKKKSFTKLISNSRLNLWNKQ</sequence>
<reference key="1">
    <citation type="journal article" date="2002" name="Nature">
        <title>The genome sequence of Schizosaccharomyces pombe.</title>
        <authorList>
            <person name="Wood V."/>
            <person name="Gwilliam R."/>
            <person name="Rajandream M.A."/>
            <person name="Lyne M.H."/>
            <person name="Lyne R."/>
            <person name="Stewart A."/>
            <person name="Sgouros J.G."/>
            <person name="Peat N."/>
            <person name="Hayles J."/>
            <person name="Baker S.G."/>
            <person name="Basham D."/>
            <person name="Bowman S."/>
            <person name="Brooks K."/>
            <person name="Brown D."/>
            <person name="Brown S."/>
            <person name="Chillingworth T."/>
            <person name="Churcher C.M."/>
            <person name="Collins M."/>
            <person name="Connor R."/>
            <person name="Cronin A."/>
            <person name="Davis P."/>
            <person name="Feltwell T."/>
            <person name="Fraser A."/>
            <person name="Gentles S."/>
            <person name="Goble A."/>
            <person name="Hamlin N."/>
            <person name="Harris D.E."/>
            <person name="Hidalgo J."/>
            <person name="Hodgson G."/>
            <person name="Holroyd S."/>
            <person name="Hornsby T."/>
            <person name="Howarth S."/>
            <person name="Huckle E.J."/>
            <person name="Hunt S."/>
            <person name="Jagels K."/>
            <person name="James K.D."/>
            <person name="Jones L."/>
            <person name="Jones M."/>
            <person name="Leather S."/>
            <person name="McDonald S."/>
            <person name="McLean J."/>
            <person name="Mooney P."/>
            <person name="Moule S."/>
            <person name="Mungall K.L."/>
            <person name="Murphy L.D."/>
            <person name="Niblett D."/>
            <person name="Odell C."/>
            <person name="Oliver K."/>
            <person name="O'Neil S."/>
            <person name="Pearson D."/>
            <person name="Quail M.A."/>
            <person name="Rabbinowitsch E."/>
            <person name="Rutherford K.M."/>
            <person name="Rutter S."/>
            <person name="Saunders D."/>
            <person name="Seeger K."/>
            <person name="Sharp S."/>
            <person name="Skelton J."/>
            <person name="Simmonds M.N."/>
            <person name="Squares R."/>
            <person name="Squares S."/>
            <person name="Stevens K."/>
            <person name="Taylor K."/>
            <person name="Taylor R.G."/>
            <person name="Tivey A."/>
            <person name="Walsh S.V."/>
            <person name="Warren T."/>
            <person name="Whitehead S."/>
            <person name="Woodward J.R."/>
            <person name="Volckaert G."/>
            <person name="Aert R."/>
            <person name="Robben J."/>
            <person name="Grymonprez B."/>
            <person name="Weltjens I."/>
            <person name="Vanstreels E."/>
            <person name="Rieger M."/>
            <person name="Schaefer M."/>
            <person name="Mueller-Auer S."/>
            <person name="Gabel C."/>
            <person name="Fuchs M."/>
            <person name="Duesterhoeft A."/>
            <person name="Fritzc C."/>
            <person name="Holzer E."/>
            <person name="Moestl D."/>
            <person name="Hilbert H."/>
            <person name="Borzym K."/>
            <person name="Langer I."/>
            <person name="Beck A."/>
            <person name="Lehrach H."/>
            <person name="Reinhardt R."/>
            <person name="Pohl T.M."/>
            <person name="Eger P."/>
            <person name="Zimmermann W."/>
            <person name="Wedler H."/>
            <person name="Wambutt R."/>
            <person name="Purnelle B."/>
            <person name="Goffeau A."/>
            <person name="Cadieu E."/>
            <person name="Dreano S."/>
            <person name="Gloux S."/>
            <person name="Lelaure V."/>
            <person name="Mottier S."/>
            <person name="Galibert F."/>
            <person name="Aves S.J."/>
            <person name="Xiang Z."/>
            <person name="Hunt C."/>
            <person name="Moore K."/>
            <person name="Hurst S.M."/>
            <person name="Lucas M."/>
            <person name="Rochet M."/>
            <person name="Gaillardin C."/>
            <person name="Tallada V.A."/>
            <person name="Garzon A."/>
            <person name="Thode G."/>
            <person name="Daga R.R."/>
            <person name="Cruzado L."/>
            <person name="Jimenez J."/>
            <person name="Sanchez M."/>
            <person name="del Rey F."/>
            <person name="Benito J."/>
            <person name="Dominguez A."/>
            <person name="Revuelta J.L."/>
            <person name="Moreno S."/>
            <person name="Armstrong J."/>
            <person name="Forsburg S.L."/>
            <person name="Cerutti L."/>
            <person name="Lowe T."/>
            <person name="McCombie W.R."/>
            <person name="Paulsen I."/>
            <person name="Potashkin J."/>
            <person name="Shpakovski G.V."/>
            <person name="Ussery D."/>
            <person name="Barrell B.G."/>
            <person name="Nurse P."/>
        </authorList>
    </citation>
    <scope>NUCLEOTIDE SEQUENCE [LARGE SCALE GENOMIC DNA]</scope>
    <source>
        <strain>972 / ATCC 24843</strain>
    </source>
</reference>
<reference key="2">
    <citation type="journal article" date="2006" name="Nat. Biotechnol.">
        <title>ORFeome cloning and global analysis of protein localization in the fission yeast Schizosaccharomyces pombe.</title>
        <authorList>
            <person name="Matsuyama A."/>
            <person name="Arai R."/>
            <person name="Yashiroda Y."/>
            <person name="Shirai A."/>
            <person name="Kamata A."/>
            <person name="Sekido S."/>
            <person name="Kobayashi Y."/>
            <person name="Hashimoto A."/>
            <person name="Hamamoto M."/>
            <person name="Hiraoka Y."/>
            <person name="Horinouchi S."/>
            <person name="Yoshida M."/>
        </authorList>
    </citation>
    <scope>SUBCELLULAR LOCATION [LARGE SCALE ANALYSIS]</scope>
</reference>
<keyword id="KW-0963">Cytoplasm</keyword>
<keyword id="KW-0539">Nucleus</keyword>
<keyword id="KW-1185">Reference proteome</keyword>